<gene>
    <name evidence="1" type="primary">nqrC</name>
    <name type="ordered locus">VV2588</name>
</gene>
<reference key="1">
    <citation type="journal article" date="2003" name="Genome Res.">
        <title>Comparative genome analysis of Vibrio vulnificus, a marine pathogen.</title>
        <authorList>
            <person name="Chen C.-Y."/>
            <person name="Wu K.-M."/>
            <person name="Chang Y.-C."/>
            <person name="Chang C.-H."/>
            <person name="Tsai H.-C."/>
            <person name="Liao T.-L."/>
            <person name="Liu Y.-M."/>
            <person name="Chen H.-J."/>
            <person name="Shen A.B.-T."/>
            <person name="Li J.-C."/>
            <person name="Su T.-L."/>
            <person name="Shao C.-P."/>
            <person name="Lee C.-T."/>
            <person name="Hor L.-I."/>
            <person name="Tsai S.-F."/>
        </authorList>
    </citation>
    <scope>NUCLEOTIDE SEQUENCE [LARGE SCALE GENOMIC DNA]</scope>
    <source>
        <strain>YJ016</strain>
    </source>
</reference>
<keyword id="KW-0997">Cell inner membrane</keyword>
<keyword id="KW-1003">Cell membrane</keyword>
<keyword id="KW-0285">Flavoprotein</keyword>
<keyword id="KW-0288">FMN</keyword>
<keyword id="KW-0406">Ion transport</keyword>
<keyword id="KW-0472">Membrane</keyword>
<keyword id="KW-0520">NAD</keyword>
<keyword id="KW-0597">Phosphoprotein</keyword>
<keyword id="KW-0915">Sodium</keyword>
<keyword id="KW-0739">Sodium transport</keyword>
<keyword id="KW-1278">Translocase</keyword>
<keyword id="KW-0812">Transmembrane</keyword>
<keyword id="KW-1133">Transmembrane helix</keyword>
<keyword id="KW-0813">Transport</keyword>
<keyword id="KW-0830">Ubiquinone</keyword>
<organism>
    <name type="scientific">Vibrio vulnificus (strain YJ016)</name>
    <dbReference type="NCBI Taxonomy" id="196600"/>
    <lineage>
        <taxon>Bacteria</taxon>
        <taxon>Pseudomonadati</taxon>
        <taxon>Pseudomonadota</taxon>
        <taxon>Gammaproteobacteria</taxon>
        <taxon>Vibrionales</taxon>
        <taxon>Vibrionaceae</taxon>
        <taxon>Vibrio</taxon>
    </lineage>
</organism>
<comment type="function">
    <text evidence="1">NQR complex catalyzes the reduction of ubiquinone-1 to ubiquinol by two successive reactions, coupled with the transport of Na(+) ions from the cytoplasm to the periplasm. NqrA to NqrE are probably involved in the second step, the conversion of ubisemiquinone to ubiquinol.</text>
</comment>
<comment type="catalytic activity">
    <reaction evidence="1">
        <text>a ubiquinone + n Na(+)(in) + NADH + H(+) = a ubiquinol + n Na(+)(out) + NAD(+)</text>
        <dbReference type="Rhea" id="RHEA:47748"/>
        <dbReference type="Rhea" id="RHEA-COMP:9565"/>
        <dbReference type="Rhea" id="RHEA-COMP:9566"/>
        <dbReference type="ChEBI" id="CHEBI:15378"/>
        <dbReference type="ChEBI" id="CHEBI:16389"/>
        <dbReference type="ChEBI" id="CHEBI:17976"/>
        <dbReference type="ChEBI" id="CHEBI:29101"/>
        <dbReference type="ChEBI" id="CHEBI:57540"/>
        <dbReference type="ChEBI" id="CHEBI:57945"/>
        <dbReference type="EC" id="7.2.1.1"/>
    </reaction>
</comment>
<comment type="cofactor">
    <cofactor evidence="1">
        <name>FMN</name>
        <dbReference type="ChEBI" id="CHEBI:58210"/>
    </cofactor>
</comment>
<comment type="subunit">
    <text evidence="1">Composed of six subunits; NqrA, NqrB, NqrC, NqrD, NqrE and NqrF.</text>
</comment>
<comment type="subcellular location">
    <subcellularLocation>
        <location evidence="1">Cell inner membrane</location>
        <topology evidence="1">Single-pass membrane protein</topology>
    </subcellularLocation>
</comment>
<comment type="similarity">
    <text evidence="1">Belongs to the NqrC family.</text>
</comment>
<comment type="sequence caution" evidence="2">
    <conflict type="erroneous initiation">
        <sequence resource="EMBL-CDS" id="BAC95352"/>
    </conflict>
</comment>
<proteinExistence type="inferred from homology"/>
<evidence type="ECO:0000255" key="1">
    <source>
        <dbReference type="HAMAP-Rule" id="MF_00427"/>
    </source>
</evidence>
<evidence type="ECO:0000305" key="2"/>
<protein>
    <recommendedName>
        <fullName evidence="1">Na(+)-translocating NADH-quinone reductase subunit C</fullName>
        <shortName evidence="1">Na(+)-NQR subunit C</shortName>
        <shortName evidence="1">Na(+)-translocating NQR subunit C</shortName>
        <ecNumber evidence="1">7.2.1.1</ecNumber>
    </recommendedName>
    <alternativeName>
        <fullName evidence="1">NQR complex subunit C</fullName>
    </alternativeName>
    <alternativeName>
        <fullName evidence="1">NQR-1 subunit C</fullName>
    </alternativeName>
</protein>
<dbReference type="EC" id="7.2.1.1" evidence="1"/>
<dbReference type="EMBL" id="BA000037">
    <property type="protein sequence ID" value="BAC95352.1"/>
    <property type="status" value="ALT_INIT"/>
    <property type="molecule type" value="Genomic_DNA"/>
</dbReference>
<dbReference type="RefSeq" id="WP_011079729.1">
    <property type="nucleotide sequence ID" value="NC_005139.1"/>
</dbReference>
<dbReference type="SMR" id="Q7MIC9"/>
<dbReference type="STRING" id="672.VV93_v1c23060"/>
<dbReference type="KEGG" id="vvy:VV2588"/>
<dbReference type="eggNOG" id="COG2869">
    <property type="taxonomic scope" value="Bacteria"/>
</dbReference>
<dbReference type="HOGENOM" id="CLU_077882_0_1_6"/>
<dbReference type="Proteomes" id="UP000002675">
    <property type="component" value="Chromosome I"/>
</dbReference>
<dbReference type="GO" id="GO:0005886">
    <property type="term" value="C:plasma membrane"/>
    <property type="evidence" value="ECO:0007669"/>
    <property type="project" value="UniProtKB-SubCell"/>
</dbReference>
<dbReference type="GO" id="GO:0010181">
    <property type="term" value="F:FMN binding"/>
    <property type="evidence" value="ECO:0007669"/>
    <property type="project" value="UniProtKB-UniRule"/>
</dbReference>
<dbReference type="GO" id="GO:0016655">
    <property type="term" value="F:oxidoreductase activity, acting on NAD(P)H, quinone or similar compound as acceptor"/>
    <property type="evidence" value="ECO:0007669"/>
    <property type="project" value="UniProtKB-UniRule"/>
</dbReference>
<dbReference type="GO" id="GO:0006814">
    <property type="term" value="P:sodium ion transport"/>
    <property type="evidence" value="ECO:0007669"/>
    <property type="project" value="UniProtKB-UniRule"/>
</dbReference>
<dbReference type="HAMAP" id="MF_00427">
    <property type="entry name" value="NqrC"/>
    <property type="match status" value="1"/>
</dbReference>
<dbReference type="InterPro" id="IPR007329">
    <property type="entry name" value="FMN-bd"/>
</dbReference>
<dbReference type="InterPro" id="IPR010204">
    <property type="entry name" value="NqrC"/>
</dbReference>
<dbReference type="NCBIfam" id="TIGR01938">
    <property type="entry name" value="nqrC"/>
    <property type="match status" value="1"/>
</dbReference>
<dbReference type="NCBIfam" id="NF003746">
    <property type="entry name" value="PRK05346.1-1"/>
    <property type="match status" value="1"/>
</dbReference>
<dbReference type="NCBIfam" id="NF003749">
    <property type="entry name" value="PRK05346.1-5"/>
    <property type="match status" value="1"/>
</dbReference>
<dbReference type="PANTHER" id="PTHR37838">
    <property type="entry name" value="NA(+)-TRANSLOCATING NADH-QUINONE REDUCTASE SUBUNIT C"/>
    <property type="match status" value="1"/>
</dbReference>
<dbReference type="PANTHER" id="PTHR37838:SF1">
    <property type="entry name" value="NA(+)-TRANSLOCATING NADH-QUINONE REDUCTASE SUBUNIT C"/>
    <property type="match status" value="1"/>
</dbReference>
<dbReference type="Pfam" id="PF04205">
    <property type="entry name" value="FMN_bind"/>
    <property type="match status" value="1"/>
</dbReference>
<dbReference type="PIRSF" id="PIRSF009437">
    <property type="entry name" value="NQR-1_subunit_C"/>
    <property type="match status" value="1"/>
</dbReference>
<dbReference type="SMART" id="SM00900">
    <property type="entry name" value="FMN_bind"/>
    <property type="match status" value="1"/>
</dbReference>
<name>NQRC_VIBVY</name>
<sequence>MASNDSIKKTLGVVVGLSLVCSIIVSTAAVGLRDQQKANAVLDKQSKIIEVAGIDSKGKKVPELFAQYIEPRLVDFATGDFVDGNAATYDQRKAAKDPAQSIKLTAEQDDAKILRRANTGVVYLVKNGDSISKIILPVHGNGLWSMMYAFVAVETDGNTVSGITYYEQGETPGLGGEVENPSWRAQFVGKKLFDENHKPAIKVVKGGAPVGSEHGVDGLSGATLTSNGVQHTFDFWLGDMGFGPFLAKVRDGGLN</sequence>
<feature type="chain" id="PRO_0000214227" description="Na(+)-translocating NADH-quinone reductase subunit C">
    <location>
        <begin position="1"/>
        <end position="255"/>
    </location>
</feature>
<feature type="transmembrane region" description="Helical" evidence="1">
    <location>
        <begin position="11"/>
        <end position="31"/>
    </location>
</feature>
<feature type="modified residue" description="FMN phosphoryl threonine" evidence="1">
    <location>
        <position position="223"/>
    </location>
</feature>
<accession>Q7MIC9</accession>